<organism>
    <name type="scientific">Methanoregula boonei (strain DSM 21154 / JCM 14090 / 6A8)</name>
    <dbReference type="NCBI Taxonomy" id="456442"/>
    <lineage>
        <taxon>Archaea</taxon>
        <taxon>Methanobacteriati</taxon>
        <taxon>Methanobacteriota</taxon>
        <taxon>Stenosarchaea group</taxon>
        <taxon>Methanomicrobia</taxon>
        <taxon>Methanomicrobiales</taxon>
        <taxon>Methanoregulaceae</taxon>
        <taxon>Methanoregula</taxon>
    </lineage>
</organism>
<protein>
    <recommendedName>
        <fullName evidence="1">Small ribosomal subunit protein uS7</fullName>
    </recommendedName>
    <alternativeName>
        <fullName evidence="2">30S ribosomal protein S7</fullName>
    </alternativeName>
</protein>
<name>RS7_METB6</name>
<keyword id="KW-1185">Reference proteome</keyword>
<keyword id="KW-0687">Ribonucleoprotein</keyword>
<keyword id="KW-0689">Ribosomal protein</keyword>
<keyword id="KW-0694">RNA-binding</keyword>
<keyword id="KW-0699">rRNA-binding</keyword>
<reference key="1">
    <citation type="journal article" date="2015" name="Microbiology">
        <title>Genome of Methanoregula boonei 6A8 reveals adaptations to oligotrophic peatland environments.</title>
        <authorList>
            <person name="Braeuer S."/>
            <person name="Cadillo-Quiroz H."/>
            <person name="Kyrpides N."/>
            <person name="Woyke T."/>
            <person name="Goodwin L."/>
            <person name="Detter C."/>
            <person name="Podell S."/>
            <person name="Yavitt J.B."/>
            <person name="Zinder S.H."/>
        </authorList>
    </citation>
    <scope>NUCLEOTIDE SEQUENCE [LARGE SCALE GENOMIC DNA]</scope>
    <source>
        <strain>DSM 21154 / JCM 14090 / 6A8</strain>
    </source>
</reference>
<dbReference type="EMBL" id="CP000780">
    <property type="protein sequence ID" value="ABS54786.1"/>
    <property type="molecule type" value="Genomic_DNA"/>
</dbReference>
<dbReference type="RefSeq" id="WP_011991274.1">
    <property type="nucleotide sequence ID" value="NC_009712.1"/>
</dbReference>
<dbReference type="SMR" id="A7I4X5"/>
<dbReference type="STRING" id="456442.Mboo_0264"/>
<dbReference type="GeneID" id="5410254"/>
<dbReference type="KEGG" id="mbn:Mboo_0264"/>
<dbReference type="eggNOG" id="arCOG04254">
    <property type="taxonomic scope" value="Archaea"/>
</dbReference>
<dbReference type="HOGENOM" id="CLU_063975_0_0_2"/>
<dbReference type="OrthoDB" id="45346at2157"/>
<dbReference type="Proteomes" id="UP000002408">
    <property type="component" value="Chromosome"/>
</dbReference>
<dbReference type="GO" id="GO:0015935">
    <property type="term" value="C:small ribosomal subunit"/>
    <property type="evidence" value="ECO:0007669"/>
    <property type="project" value="InterPro"/>
</dbReference>
<dbReference type="GO" id="GO:0019843">
    <property type="term" value="F:rRNA binding"/>
    <property type="evidence" value="ECO:0007669"/>
    <property type="project" value="UniProtKB-UniRule"/>
</dbReference>
<dbReference type="GO" id="GO:0003735">
    <property type="term" value="F:structural constituent of ribosome"/>
    <property type="evidence" value="ECO:0007669"/>
    <property type="project" value="InterPro"/>
</dbReference>
<dbReference type="GO" id="GO:0006412">
    <property type="term" value="P:translation"/>
    <property type="evidence" value="ECO:0007669"/>
    <property type="project" value="UniProtKB-UniRule"/>
</dbReference>
<dbReference type="CDD" id="cd14867">
    <property type="entry name" value="uS7_Eukaryote"/>
    <property type="match status" value="1"/>
</dbReference>
<dbReference type="Gene3D" id="1.10.455.10">
    <property type="entry name" value="Ribosomal protein S7 domain"/>
    <property type="match status" value="1"/>
</dbReference>
<dbReference type="HAMAP" id="MF_00480_A">
    <property type="entry name" value="Ribosomal_uS7_A"/>
    <property type="match status" value="1"/>
</dbReference>
<dbReference type="InterPro" id="IPR000235">
    <property type="entry name" value="Ribosomal_uS7"/>
</dbReference>
<dbReference type="InterPro" id="IPR026018">
    <property type="entry name" value="Ribosomal_uS7_arc"/>
</dbReference>
<dbReference type="InterPro" id="IPR020606">
    <property type="entry name" value="Ribosomal_uS7_CS"/>
</dbReference>
<dbReference type="InterPro" id="IPR023798">
    <property type="entry name" value="Ribosomal_uS7_dom"/>
</dbReference>
<dbReference type="InterPro" id="IPR036823">
    <property type="entry name" value="Ribosomal_uS7_dom_sf"/>
</dbReference>
<dbReference type="InterPro" id="IPR005716">
    <property type="entry name" value="Ribosomal_uS7_euk/arc"/>
</dbReference>
<dbReference type="NCBIfam" id="NF003106">
    <property type="entry name" value="PRK04027.1"/>
    <property type="match status" value="1"/>
</dbReference>
<dbReference type="NCBIfam" id="TIGR01028">
    <property type="entry name" value="uS7_euk_arch"/>
    <property type="match status" value="1"/>
</dbReference>
<dbReference type="PANTHER" id="PTHR11205">
    <property type="entry name" value="RIBOSOMAL PROTEIN S7"/>
    <property type="match status" value="1"/>
</dbReference>
<dbReference type="Pfam" id="PF00177">
    <property type="entry name" value="Ribosomal_S7"/>
    <property type="match status" value="1"/>
</dbReference>
<dbReference type="PIRSF" id="PIRSF002122">
    <property type="entry name" value="RPS7p_RPS7a_RPS5e_RPS7o"/>
    <property type="match status" value="1"/>
</dbReference>
<dbReference type="SUPFAM" id="SSF47973">
    <property type="entry name" value="Ribosomal protein S7"/>
    <property type="match status" value="1"/>
</dbReference>
<dbReference type="PROSITE" id="PS00052">
    <property type="entry name" value="RIBOSOMAL_S7"/>
    <property type="match status" value="1"/>
</dbReference>
<evidence type="ECO:0000255" key="1">
    <source>
        <dbReference type="HAMAP-Rule" id="MF_00480"/>
    </source>
</evidence>
<evidence type="ECO:0000305" key="2"/>
<sequence length="204" mass="22547">MAEAEVKAQPEGDAAPQSKALLFNKWDVSEVKVTDPSLVRYVNLTPQIIPHSCGKFSRQEFNKANMMIVERLINRLMQTENNTGKKQLAIGIVRDAFELINKKTKRNPIEVLVEAIGNTGPREETVRLKYGGINVPKSVDTAPLRRVDSAIGFIAEAVWKSSRKSKKPASAILADELIAASKGDAKCYSVGKKEEKERIAKSAR</sequence>
<feature type="chain" id="PRO_0000344314" description="Small ribosomal subunit protein uS7">
    <location>
        <begin position="1"/>
        <end position="204"/>
    </location>
</feature>
<proteinExistence type="inferred from homology"/>
<comment type="function">
    <text evidence="1">One of the primary rRNA binding proteins, it binds directly to 16S rRNA where it nucleates assembly of the head domain of the 30S subunit. Is located at the subunit interface close to the decoding center.</text>
</comment>
<comment type="subunit">
    <text evidence="1">Part of the 30S ribosomal subunit.</text>
</comment>
<comment type="similarity">
    <text evidence="1">Belongs to the universal ribosomal protein uS7 family.</text>
</comment>
<gene>
    <name evidence="1" type="primary">rps7</name>
    <name type="ordered locus">Mboo_0264</name>
</gene>
<accession>A7I4X5</accession>